<sequence length="24" mass="2722">SLGGKPDLRPCHPPCHYIPRPKPR</sequence>
<protein>
    <recommendedName>
        <fullName>Waglerin-3</fullName>
    </recommendedName>
    <alternativeName>
        <fullName>SL-Waglerin-1</fullName>
        <shortName>SL-I</shortName>
    </alternativeName>
    <component>
        <recommendedName>
            <fullName>Waglerin-1</fullName>
        </recommendedName>
        <alternativeName>
            <fullName>Lethal peptide I</fullName>
        </alternativeName>
        <alternativeName>
            <fullName>Waglerin I</fullName>
        </alternativeName>
        <alternativeName>
            <fullName>Wtx-1</fullName>
        </alternativeName>
    </component>
</protein>
<keyword id="KW-0008">Acetylcholine receptor inhibiting toxin</keyword>
<keyword id="KW-0903">Direct protein sequencing</keyword>
<keyword id="KW-1015">Disulfide bond</keyword>
<keyword id="KW-0872">Ion channel impairing toxin</keyword>
<keyword id="KW-0528">Neurotoxin</keyword>
<keyword id="KW-0629">Postsynaptic neurotoxin</keyword>
<keyword id="KW-0964">Secreted</keyword>
<keyword id="KW-0800">Toxin</keyword>
<proteinExistence type="evidence at protein level"/>
<feature type="peptide" id="PRO_0000404085" description="Waglerin-3">
    <location>
        <begin position="1"/>
        <end position="24"/>
    </location>
</feature>
<feature type="peptide" id="PRO_0000044549" description="Waglerin-1">
    <location>
        <begin position="3"/>
        <end position="24"/>
    </location>
</feature>
<feature type="region of interest" description="Disordered" evidence="1">
    <location>
        <begin position="1"/>
        <end position="24"/>
    </location>
</feature>
<feature type="compositionally biased region" description="Basic and acidic residues" evidence="1">
    <location>
        <begin position="1"/>
        <end position="10"/>
    </location>
</feature>
<feature type="disulfide bond" evidence="2">
    <location>
        <begin position="11"/>
        <end position="15"/>
    </location>
</feature>
<feature type="mutagenesis site" description="No loss of affinity; in Waglerin-1." evidence="5">
    <location>
        <begin position="3"/>
        <end position="4"/>
    </location>
</feature>
<feature type="mutagenesis site" description="No decrease in lethality; in Waglerin-1." evidence="4">
    <original>K</original>
    <variation>A</variation>
    <location>
        <position position="5"/>
    </location>
</feature>
<feature type="mutagenesis site" description="Slight decrease in lethality; in Waglerin-1." evidence="3">
    <original>D</original>
    <variation>E</variation>
    <variation>N</variation>
    <location>
        <position position="7"/>
    </location>
</feature>
<feature type="mutagenesis site" description="Slight decrease in lethality; in Waglerin-1." evidence="4">
    <original>R</original>
    <variation>A</variation>
    <location>
        <position position="9"/>
    </location>
</feature>
<feature type="mutagenesis site" description="3000-fold decrease in affinity at the alpha-epsilon site of nAChR and 4- to 9-fold decrease at the alpha-gamma and alpha-delta sites, respectively; when associated with S-15 in Waglerin-1." evidence="5">
    <original>C</original>
    <variation>S</variation>
    <location>
        <position position="11"/>
    </location>
</feature>
<feature type="mutagenesis site" description="Very important (34-fold) decrease in lethality; in Waglerin-1." evidence="4 5">
    <original>H</original>
    <variation>A</variation>
    <location>
        <position position="12"/>
    </location>
</feature>
<feature type="mutagenesis site" description="260-fold decrease in affinity; in Waglerin-1." evidence="4 5">
    <original>H</original>
    <variation>D</variation>
    <location>
        <position position="12"/>
    </location>
</feature>
<feature type="mutagenesis site" description="3000-fold decrease in affinity at the alpha-epsilon site of nAChR and 4- to 9-fold decrease at the alpha-gamma and alpha-delta sites, respectively; when associated with S-11 in Waglerin-1." evidence="5">
    <original>C</original>
    <variation>S</variation>
    <location>
        <position position="15"/>
    </location>
</feature>
<feature type="mutagenesis site" description="Important (16-fold) decrease in lethality; in Waglerin-1." evidence="4 5">
    <original>H</original>
    <variation>A</variation>
    <location>
        <position position="16"/>
    </location>
</feature>
<feature type="mutagenesis site" description="1160-fold decrease in affinity; in Waglerin-1." evidence="4 5">
    <original>H</original>
    <variation>D</variation>
    <location>
        <position position="16"/>
    </location>
</feature>
<feature type="mutagenesis site" description="Slight decrease in lethality; in Waglerin-1." evidence="4">
    <original>R</original>
    <variation>A</variation>
    <location>
        <position position="20"/>
    </location>
</feature>
<feature type="mutagenesis site" description="Slight decrease in lethality; in Waglerin-1." evidence="4">
    <original>K</original>
    <variation>A</variation>
    <location>
        <position position="22"/>
    </location>
</feature>
<feature type="mutagenesis site" description="No loss of affinity; in Waglerin-1." evidence="5">
    <location>
        <begin position="23"/>
        <end position="24"/>
    </location>
</feature>
<feature type="mutagenesis site" description="Slight decrease in lethality; in Waglerin-1." evidence="4">
    <original>R</original>
    <variation>A</variation>
    <location>
        <position position="24"/>
    </location>
</feature>
<evidence type="ECO:0000256" key="1">
    <source>
        <dbReference type="SAM" id="MobiDB-lite"/>
    </source>
</evidence>
<evidence type="ECO:0000269" key="2">
    <source>
    </source>
</evidence>
<evidence type="ECO:0000269" key="3">
    <source>
    </source>
</evidence>
<evidence type="ECO:0000269" key="4">
    <source>
    </source>
</evidence>
<evidence type="ECO:0000269" key="5">
    <source ref="9"/>
</evidence>
<evidence type="ECO:0000305" key="6"/>
<reference key="1">
    <citation type="journal article" date="1992" name="Toxicon">
        <title>Molecular properties and structure-function relationships of lethal peptides from venom of Wagler's pit viper, Trimeresurus wagleri.</title>
        <authorList>
            <person name="Schmidt J.J."/>
            <person name="Weinstein S.A."/>
            <person name="Smith L.A."/>
        </authorList>
    </citation>
    <scope>PROTEIN SEQUENCE (WAGLERIN-3)</scope>
    <scope>SYNTHESIS OF 1-24 (WAGLERIN-3) AND 3-24 (WAGLERIN-1)</scope>
    <scope>DISULFIDE BOND</scope>
    <scope>TOXIC DOSE</scope>
    <source>
        <tissue>Venom</tissue>
    </source>
</reference>
<reference key="2">
    <citation type="journal article" date="1991" name="Toxicon">
        <title>Characterization and amino acid sequences of two lethal peptides isolated from venom of Wagler's pit viper, Trimeresurus wagleri.</title>
        <authorList>
            <person name="Weinstein S.A."/>
            <person name="Schmidt J.J."/>
            <person name="Bernheimer A.W."/>
            <person name="Smith L.A."/>
        </authorList>
    </citation>
    <scope>PROTEIN SEQUENCE OF 3-24 (WAGLERIN-1)</scope>
    <scope>TOXIC DOSE</scope>
    <source>
        <tissue>Venom</tissue>
    </source>
</reference>
<reference key="3">
    <citation type="journal article" date="1995" name="Toxicon">
        <title>A study on the cause of death due to waglerin-I, a toxin from Trimeresurus wagleri.</title>
        <authorList>
            <person name="Lin W.W."/>
            <person name="Smith L.A."/>
            <person name="Lee C.Y."/>
        </authorList>
    </citation>
    <scope>FUNCTION (WAGLERIN-1)</scope>
</reference>
<reference key="4">
    <citation type="journal article" date="1995" name="Toxicon">
        <title>Structure-function studies of waglerin I, a lethal peptide from the venom of Wagler's pit viper, Trimeresurus wagleri.</title>
        <authorList>
            <person name="Schmidt J.J."/>
            <person name="Weinstein S.A."/>
        </authorList>
    </citation>
    <scope>MUTAGENESIS OF ASP-7</scope>
</reference>
<reference key="5">
    <citation type="journal article" date="1996" name="Biochem. Biophys. Res. Commun.">
        <title>Protein engineering of venom toxins by synthetic approach and NMR dynamic simulation: status of basic amino acid residues in waglerin I.</title>
        <authorList>
            <person name="Hsiao Y.-M."/>
            <person name="Chuang C.-C."/>
            <person name="Chuang L.-C."/>
            <person name="Yu H.-M."/>
            <person name="Wang K.-T."/>
            <person name="Chiou S.-H."/>
            <person name="Wu S.-H."/>
        </authorList>
    </citation>
    <scope>TOXIC DOSE</scope>
    <scope>SYNTHESIS</scope>
    <scope>MUTAGENESIS OF LYS-5; ARG-9; HIS-12; HIS-16; ARG-20; LYS-22 AND ARG-24</scope>
</reference>
<reference key="6">
    <citation type="journal article" date="1997" name="J. Pharmacol. Exp. Ther.">
        <title>Waglerin-1 modulates gamma-aminobutyric acid activated current of murine hypothalamic neurons.</title>
        <authorList>
            <person name="Ye J.-H."/>
            <person name="McArdle J.J."/>
        </authorList>
    </citation>
    <scope>FUNCTION</scope>
    <scope>TOXIN TARGET</scope>
    <source>
        <tissue>Venom</tissue>
    </source>
</reference>
<reference key="7">
    <citation type="journal article" date="1999" name="J. Pharmacol. Exp. Ther.">
        <title>Waglerin-1 selectively blocks the epsilon form of the muscle nicotinic acetylcholine receptor.</title>
        <authorList>
            <person name="McArdle J.J."/>
            <person name="Lentz T.L."/>
            <person name="Witzemann V."/>
            <person name="Schwarz H."/>
            <person name="Weinstein S.A."/>
            <person name="Schmidt J.J."/>
        </authorList>
    </citation>
    <scope>FUNCTION (WAGLERIN-1)</scope>
    <scope>TOXIN TARGET</scope>
</reference>
<reference key="8">
    <citation type="journal article" date="2002" name="J. Biol. Chem.">
        <title>Identification of residues at the alpha and epsilon subunit interfaces mediating species selectivity of Waglerin-1 for nicotinic acetylcholine receptors.</title>
        <authorList>
            <person name="Molles B.E."/>
            <person name="Rezai P."/>
            <person name="Kline E.F."/>
            <person name="McArdle J.J."/>
            <person name="Sine S.M."/>
            <person name="Taylor P."/>
        </authorList>
    </citation>
    <scope>FUNCTION</scope>
    <scope>TOXIN TARGET</scope>
</reference>
<reference key="9">
    <citation type="journal article" date="2002" name="J. Toxicol. Toxin Rev.">
        <title>Structure and function of the waglerins, peptide toxins from the venom of Wagler's Pit Viper, Tropidolaemus wagleri.</title>
        <authorList>
            <person name="Molles B.E."/>
            <person name="Taylor P."/>
        </authorList>
    </citation>
    <scope>FUNCTION</scope>
    <scope>TOXIN TARGET</scope>
    <scope>MUTAGENESIS OF 3-GLY-GLY-4; 23-PRO-ARG-24; CYS-11; HIS-12; CYS-15 AND HIS-16</scope>
    <scope>REVIEW</scope>
</reference>
<reference key="10">
    <citation type="journal article" date="1996" name="Biochim. Biophys. Acta">
        <title>Determination of three-dimensional solution structure of waglerin I, a toxin from Trimeresurus wagleri, using 2D-NMR and molecular dynamics simulation.</title>
        <authorList>
            <person name="Chuang L.C."/>
            <person name="Yu H.M."/>
            <person name="Chen C."/>
            <person name="Huang T.H."/>
            <person name="Wu S.H."/>
            <person name="Wang K.T."/>
        </authorList>
    </citation>
    <scope>STRUCTURE BY NMR OF 3-24</scope>
    <scope>SYNTHESIS OF 3-24</scope>
    <scope>ISOMERIZATION (WAGLERIN-1)</scope>
</reference>
<reference key="11">
    <citation type="journal article" date="1996" name="Biophys. J.">
        <title>Conformational analysis of a toxic peptide from Trimeresurus wagleri which blocks the nicotinic acetylcholine receptor.</title>
        <authorList>
            <person name="Sellin L.C."/>
            <person name="Mattila K."/>
            <person name="Annila A."/>
            <person name="Schmidt J.J."/>
            <person name="McArdle J.J."/>
            <person name="Hyvonen M."/>
            <person name="Rantala T.T."/>
            <person name="Kivisto T."/>
        </authorList>
    </citation>
    <scope>STRUCTURE BY NMR OF 3-24</scope>
</reference>
<name>WAG13_TROWA</name>
<comment type="function">
    <text>Waglerin-1 selectively blocks the epsilon subunit of muscle nicotinic acetylcholine receptor (nAChR). Also has effects on rodent ionotropic GABA(A) receptors (GABR), since it potentiates I(GABA) in some neurons and depresses I(GABA) in others. In mice, it elicits tachypnea, ocular proptosis, rapid collapse and spasms, whereas no toxic effects on respiration and blood pressure are observed in rats.</text>
</comment>
<comment type="function">
    <text>Waglerin-3 selectively blocks the epsilon subunit of muscle nicotinic acetylcholine receptor (nAChR). It elicits tachypnea, ocular proptosis, rapid collapse and spasms in mice. It causes death by respiratory failure.</text>
</comment>
<comment type="subunit">
    <text>Waglerin-1 is monomeric.</text>
</comment>
<comment type="subcellular location">
    <subcellularLocation>
        <location>Secreted</location>
    </subcellularLocation>
</comment>
<comment type="tissue specificity">
    <text>Expressed by the venom gland.</text>
</comment>
<comment type="PTM">
    <text>Amidation of the waglerin-1 C-terminus increases the affinity by 2-fold.</text>
</comment>
<comment type="toxic dose">
    <text>LD(50) of waglerin-1 is 0.33-0.369 mg/kg by intraperitoneal injection into mice.</text>
</comment>
<comment type="toxic dose">
    <text>LD(50) of waglerin-3 is 0.22 mg/kg by intraperitoneal injection into mice.</text>
</comment>
<comment type="miscellaneous">
    <text>Exists in two forms, due to cis-trans isomerization at 13-Pro-Pro-14.</text>
</comment>
<comment type="similarity">
    <text evidence="6">Belongs to the waglerin family.</text>
</comment>
<comment type="caution">
    <text evidence="6">Mutagenesis results from PubMed:8858103 should be interpreted carefully, since the authors found waglerin-2 (AC P58930) as inactive, despite the finding of other groups that found this peptide equipotent in lethality to waglerin-1.</text>
</comment>
<accession>P24335</accession>
<dbReference type="PIR" id="B44008">
    <property type="entry name" value="B44008"/>
</dbReference>
<dbReference type="GO" id="GO:0005576">
    <property type="term" value="C:extracellular region"/>
    <property type="evidence" value="ECO:0007669"/>
    <property type="project" value="UniProtKB-SubCell"/>
</dbReference>
<dbReference type="GO" id="GO:0030550">
    <property type="term" value="F:acetylcholine receptor inhibitor activity"/>
    <property type="evidence" value="ECO:0007669"/>
    <property type="project" value="UniProtKB-KW"/>
</dbReference>
<dbReference type="GO" id="GO:0099106">
    <property type="term" value="F:ion channel regulator activity"/>
    <property type="evidence" value="ECO:0007669"/>
    <property type="project" value="UniProtKB-KW"/>
</dbReference>
<dbReference type="GO" id="GO:0090729">
    <property type="term" value="F:toxin activity"/>
    <property type="evidence" value="ECO:0007669"/>
    <property type="project" value="UniProtKB-KW"/>
</dbReference>
<dbReference type="InterPro" id="IPR012637">
    <property type="entry name" value="Toxin_33"/>
</dbReference>
<dbReference type="Pfam" id="PF08121">
    <property type="entry name" value="Toxin_33"/>
    <property type="match status" value="1"/>
</dbReference>
<organism>
    <name type="scientific">Tropidolaemus wagleri</name>
    <name type="common">Wagler's pit viper</name>
    <name type="synonym">Trimeresurus wagleri</name>
    <dbReference type="NCBI Taxonomy" id="8770"/>
    <lineage>
        <taxon>Eukaryota</taxon>
        <taxon>Metazoa</taxon>
        <taxon>Chordata</taxon>
        <taxon>Craniata</taxon>
        <taxon>Vertebrata</taxon>
        <taxon>Euteleostomi</taxon>
        <taxon>Lepidosauria</taxon>
        <taxon>Squamata</taxon>
        <taxon>Bifurcata</taxon>
        <taxon>Unidentata</taxon>
        <taxon>Episquamata</taxon>
        <taxon>Toxicofera</taxon>
        <taxon>Serpentes</taxon>
        <taxon>Colubroidea</taxon>
        <taxon>Viperidae</taxon>
        <taxon>Crotalinae</taxon>
        <taxon>Tropidolaemus</taxon>
    </lineage>
</organism>